<reference key="1">
    <citation type="journal article" date="2010" name="PLoS ONE">
        <title>Genome sequence of Cronobacter sakazakii BAA-894 and comparative genomic hybridization analysis with other Cronobacter species.</title>
        <authorList>
            <person name="Kucerova E."/>
            <person name="Clifton S.W."/>
            <person name="Xia X.Q."/>
            <person name="Long F."/>
            <person name="Porwollik S."/>
            <person name="Fulton L."/>
            <person name="Fronick C."/>
            <person name="Minx P."/>
            <person name="Kyung K."/>
            <person name="Warren W."/>
            <person name="Fulton R."/>
            <person name="Feng D."/>
            <person name="Wollam A."/>
            <person name="Shah N."/>
            <person name="Bhonagiri V."/>
            <person name="Nash W.E."/>
            <person name="Hallsworth-Pepin K."/>
            <person name="Wilson R.K."/>
            <person name="McClelland M."/>
            <person name="Forsythe S.J."/>
        </authorList>
    </citation>
    <scope>NUCLEOTIDE SEQUENCE [LARGE SCALE GENOMIC DNA]</scope>
    <source>
        <strain>ATCC BAA-894</strain>
    </source>
</reference>
<evidence type="ECO:0000255" key="1">
    <source>
        <dbReference type="HAMAP-Rule" id="MF_01412"/>
    </source>
</evidence>
<evidence type="ECO:0000255" key="2">
    <source>
        <dbReference type="PROSITE-ProRule" id="PRU00543"/>
    </source>
</evidence>
<gene>
    <name evidence="1" type="primary">kefB</name>
    <name type="ordered locus">ESA_04389</name>
</gene>
<dbReference type="EMBL" id="CP000783">
    <property type="protein sequence ID" value="ABU79568.1"/>
    <property type="molecule type" value="Genomic_DNA"/>
</dbReference>
<dbReference type="RefSeq" id="WP_007899710.1">
    <property type="nucleotide sequence ID" value="NC_009778.1"/>
</dbReference>
<dbReference type="SMR" id="A7ME23"/>
<dbReference type="GeneID" id="56732984"/>
<dbReference type="KEGG" id="esa:ESA_04389"/>
<dbReference type="HOGENOM" id="CLU_005126_9_3_6"/>
<dbReference type="Proteomes" id="UP000000260">
    <property type="component" value="Chromosome"/>
</dbReference>
<dbReference type="GO" id="GO:0005886">
    <property type="term" value="C:plasma membrane"/>
    <property type="evidence" value="ECO:0007669"/>
    <property type="project" value="UniProtKB-SubCell"/>
</dbReference>
<dbReference type="GO" id="GO:0015503">
    <property type="term" value="F:glutathione-regulated potassium exporter activity"/>
    <property type="evidence" value="ECO:0007669"/>
    <property type="project" value="UniProtKB-UniRule"/>
</dbReference>
<dbReference type="GO" id="GO:1902600">
    <property type="term" value="P:proton transmembrane transport"/>
    <property type="evidence" value="ECO:0007669"/>
    <property type="project" value="InterPro"/>
</dbReference>
<dbReference type="FunFam" id="1.20.1530.20:FF:000001">
    <property type="entry name" value="Glutathione-regulated potassium-efflux system protein KefB"/>
    <property type="match status" value="1"/>
</dbReference>
<dbReference type="FunFam" id="3.40.50.720:FF:000036">
    <property type="entry name" value="Glutathione-regulated potassium-efflux system protein KefB"/>
    <property type="match status" value="1"/>
</dbReference>
<dbReference type="Gene3D" id="1.20.1530.20">
    <property type="match status" value="1"/>
</dbReference>
<dbReference type="Gene3D" id="3.40.50.720">
    <property type="entry name" value="NAD(P)-binding Rossmann-like Domain"/>
    <property type="match status" value="1"/>
</dbReference>
<dbReference type="HAMAP" id="MF_01412">
    <property type="entry name" value="K_H_efflux_KefB"/>
    <property type="match status" value="1"/>
</dbReference>
<dbReference type="InterPro" id="IPR006153">
    <property type="entry name" value="Cation/H_exchanger_TM"/>
</dbReference>
<dbReference type="InterPro" id="IPR004771">
    <property type="entry name" value="K/H_exchanger"/>
</dbReference>
<dbReference type="InterPro" id="IPR020884">
    <property type="entry name" value="K_H_efflux_KefB"/>
</dbReference>
<dbReference type="InterPro" id="IPR038770">
    <property type="entry name" value="Na+/solute_symporter_sf"/>
</dbReference>
<dbReference type="InterPro" id="IPR036291">
    <property type="entry name" value="NAD(P)-bd_dom_sf"/>
</dbReference>
<dbReference type="InterPro" id="IPR003148">
    <property type="entry name" value="RCK_N"/>
</dbReference>
<dbReference type="NCBIfam" id="TIGR00932">
    <property type="entry name" value="2a37"/>
    <property type="match status" value="1"/>
</dbReference>
<dbReference type="NCBIfam" id="NF002973">
    <property type="entry name" value="PRK03659.1"/>
    <property type="match status" value="1"/>
</dbReference>
<dbReference type="PANTHER" id="PTHR46157">
    <property type="entry name" value="K(+) EFFLUX ANTIPORTER 3, CHLOROPLASTIC"/>
    <property type="match status" value="1"/>
</dbReference>
<dbReference type="PANTHER" id="PTHR46157:SF4">
    <property type="entry name" value="K(+) EFFLUX ANTIPORTER 3, CHLOROPLASTIC"/>
    <property type="match status" value="1"/>
</dbReference>
<dbReference type="Pfam" id="PF00999">
    <property type="entry name" value="Na_H_Exchanger"/>
    <property type="match status" value="1"/>
</dbReference>
<dbReference type="Pfam" id="PF02254">
    <property type="entry name" value="TrkA_N"/>
    <property type="match status" value="1"/>
</dbReference>
<dbReference type="SUPFAM" id="SSF51735">
    <property type="entry name" value="NAD(P)-binding Rossmann-fold domains"/>
    <property type="match status" value="1"/>
</dbReference>
<dbReference type="PROSITE" id="PS51201">
    <property type="entry name" value="RCK_N"/>
    <property type="match status" value="1"/>
</dbReference>
<sequence length="601" mass="66356">MEGSDLLLAGILFLFAAVVAVPIAARLGIGAVLGYLLAGIAIGPWGLGFISDVDEILHFSELGVVFLMFLIGLELNPSKLWKLRRSIFGIGAAQVLLSAVVLAGLLMLTDFAWQAAVVGGIGLAMSSTAMALQLMRDKGMNRTEGGQLGFSVLLFQDLAVIPALAMVPLLAGNGDEHPDWLKIGMKVLAFAVMLVGGRYLLRPVFRFIAGSGVREVFTAAALLLVLGSALFMDLLGLSMALGTFIAGILLAESEYRHELEIAIEPFKGLLLGLFFISVGMALNLGVLYTHILWVVMSVVVLVSVKMAVLYGLGRFQGLRRTERLPFAGVLSQGGEFAFVLFSSASSQKLFHNDQMALLLVTVTLSMMTTPLVMKGIDRLLARHFNAPDEDAEMPYVEDDKPQVIIVGFGRFGQVIGRLLMANKMRITVLERDISAVNLMRKYGYKVYYGDATELELLRAAGAESAQSIVVTCNDPEDTMRIVHLCQQHFPQMEILARARGRVEAHELLQAGVKQFSRETFSSALELGRKTLISLGMHPHQAQRAQLHFRRLDMRMLRELMPVHTDNAQISRVREARRELEEIFHREMQQERRQLDGWDEFE</sequence>
<comment type="function">
    <text evidence="1">Pore-forming subunit of a potassium efflux system that confers protection against electrophiles. Catalyzes K(+)/H(+) antiport.</text>
</comment>
<comment type="subunit">
    <text evidence="1">Interacts with the regulatory subunit KefG.</text>
</comment>
<comment type="subcellular location">
    <subcellularLocation>
        <location evidence="1">Cell inner membrane</location>
        <topology evidence="1">Multi-pass membrane protein</topology>
    </subcellularLocation>
</comment>
<comment type="similarity">
    <text evidence="1">Belongs to the monovalent cation:proton antiporter 2 (CPA2) transporter (TC 2.A.37) family. KefB subfamily.</text>
</comment>
<name>KEFB_CROS8</name>
<accession>A7ME23</accession>
<feature type="chain" id="PRO_1000068457" description="Glutathione-regulated potassium-efflux system protein KefB">
    <location>
        <begin position="1"/>
        <end position="601"/>
    </location>
</feature>
<feature type="transmembrane region" description="Helical" evidence="1">
    <location>
        <begin position="5"/>
        <end position="25"/>
    </location>
</feature>
<feature type="transmembrane region" description="Helical" evidence="1">
    <location>
        <begin position="29"/>
        <end position="49"/>
    </location>
</feature>
<feature type="transmembrane region" description="Helical" evidence="1">
    <location>
        <begin position="55"/>
        <end position="75"/>
    </location>
</feature>
<feature type="transmembrane region" description="Helical" evidence="1">
    <location>
        <begin position="87"/>
        <end position="107"/>
    </location>
</feature>
<feature type="transmembrane region" description="Helical" evidence="1">
    <location>
        <begin position="115"/>
        <end position="135"/>
    </location>
</feature>
<feature type="transmembrane region" description="Helical" evidence="1">
    <location>
        <begin position="152"/>
        <end position="172"/>
    </location>
</feature>
<feature type="transmembrane region" description="Helical" evidence="1">
    <location>
        <begin position="181"/>
        <end position="201"/>
    </location>
</feature>
<feature type="transmembrane region" description="Helical" evidence="1">
    <location>
        <begin position="207"/>
        <end position="227"/>
    </location>
</feature>
<feature type="transmembrane region" description="Helical" evidence="1">
    <location>
        <begin position="230"/>
        <end position="250"/>
    </location>
</feature>
<feature type="transmembrane region" description="Helical" evidence="1">
    <location>
        <begin position="268"/>
        <end position="288"/>
    </location>
</feature>
<feature type="transmembrane region" description="Helical" evidence="1">
    <location>
        <begin position="291"/>
        <end position="311"/>
    </location>
</feature>
<feature type="transmembrane region" description="Helical" evidence="1">
    <location>
        <begin position="324"/>
        <end position="344"/>
    </location>
</feature>
<feature type="transmembrane region" description="Helical" evidence="1">
    <location>
        <begin position="356"/>
        <end position="376"/>
    </location>
</feature>
<feature type="domain" description="RCK N-terminal" evidence="2">
    <location>
        <begin position="400"/>
        <end position="519"/>
    </location>
</feature>
<keyword id="KW-0050">Antiport</keyword>
<keyword id="KW-0997">Cell inner membrane</keyword>
<keyword id="KW-1003">Cell membrane</keyword>
<keyword id="KW-0406">Ion transport</keyword>
<keyword id="KW-0472">Membrane</keyword>
<keyword id="KW-0630">Potassium</keyword>
<keyword id="KW-0633">Potassium transport</keyword>
<keyword id="KW-1185">Reference proteome</keyword>
<keyword id="KW-0812">Transmembrane</keyword>
<keyword id="KW-1133">Transmembrane helix</keyword>
<keyword id="KW-0813">Transport</keyword>
<organism>
    <name type="scientific">Cronobacter sakazakii (strain ATCC BAA-894)</name>
    <name type="common">Enterobacter sakazakii</name>
    <dbReference type="NCBI Taxonomy" id="290339"/>
    <lineage>
        <taxon>Bacteria</taxon>
        <taxon>Pseudomonadati</taxon>
        <taxon>Pseudomonadota</taxon>
        <taxon>Gammaproteobacteria</taxon>
        <taxon>Enterobacterales</taxon>
        <taxon>Enterobacteriaceae</taxon>
        <taxon>Cronobacter</taxon>
    </lineage>
</organism>
<proteinExistence type="inferred from homology"/>
<protein>
    <recommendedName>
        <fullName evidence="1">Glutathione-regulated potassium-efflux system protein KefB</fullName>
    </recommendedName>
    <alternativeName>
        <fullName evidence="1">K(+)/H(+) antiporter</fullName>
    </alternativeName>
</protein>